<name>DEF_PETIN</name>
<proteinExistence type="evidence at transcript level"/>
<organism>
    <name type="scientific">Petunia integrifolia</name>
    <name type="common">Violet-flowered petunia</name>
    <name type="synonym">Salpiglossis integrifolia</name>
    <dbReference type="NCBI Taxonomy" id="4103"/>
    <lineage>
        <taxon>Eukaryota</taxon>
        <taxon>Viridiplantae</taxon>
        <taxon>Streptophyta</taxon>
        <taxon>Embryophyta</taxon>
        <taxon>Tracheophyta</taxon>
        <taxon>Spermatophyta</taxon>
        <taxon>Magnoliopsida</taxon>
        <taxon>eudicotyledons</taxon>
        <taxon>Gunneridae</taxon>
        <taxon>Pentapetalae</taxon>
        <taxon>asterids</taxon>
        <taxon>lamiids</taxon>
        <taxon>Solanales</taxon>
        <taxon>Solanaceae</taxon>
        <taxon>Petunioideae</taxon>
        <taxon>Petunia</taxon>
    </lineage>
</organism>
<keyword id="KW-0929">Antimicrobial</keyword>
<keyword id="KW-1015">Disulfide bond</keyword>
<keyword id="KW-0295">Fungicide</keyword>
<keyword id="KW-0611">Plant defense</keyword>
<keyword id="KW-0964">Secreted</keyword>
<keyword id="KW-0732">Signal</keyword>
<dbReference type="EMBL" id="L27173">
    <property type="protein sequence ID" value="AAA64740.1"/>
    <property type="molecule type" value="Genomic_DNA"/>
</dbReference>
<dbReference type="PIR" id="S52634">
    <property type="entry name" value="S52634"/>
</dbReference>
<dbReference type="SMR" id="Q40901"/>
<dbReference type="GO" id="GO:0005576">
    <property type="term" value="C:extracellular region"/>
    <property type="evidence" value="ECO:0007669"/>
    <property type="project" value="UniProtKB-SubCell"/>
</dbReference>
<dbReference type="GO" id="GO:0050832">
    <property type="term" value="P:defense response to fungus"/>
    <property type="evidence" value="ECO:0007669"/>
    <property type="project" value="UniProtKB-KW"/>
</dbReference>
<dbReference type="GO" id="GO:0031640">
    <property type="term" value="P:killing of cells of another organism"/>
    <property type="evidence" value="ECO:0007669"/>
    <property type="project" value="UniProtKB-KW"/>
</dbReference>
<dbReference type="CDD" id="cd00107">
    <property type="entry name" value="Knot1"/>
    <property type="match status" value="1"/>
</dbReference>
<dbReference type="Gene3D" id="3.30.30.10">
    <property type="entry name" value="Knottin, scorpion toxin-like"/>
    <property type="match status" value="1"/>
</dbReference>
<dbReference type="InterPro" id="IPR008176">
    <property type="entry name" value="Defensin_plant"/>
</dbReference>
<dbReference type="InterPro" id="IPR003614">
    <property type="entry name" value="Scorpion_toxin-like"/>
</dbReference>
<dbReference type="InterPro" id="IPR036574">
    <property type="entry name" value="Scorpion_toxin-like_sf"/>
</dbReference>
<dbReference type="PANTHER" id="PTHR33147:SF27">
    <property type="entry name" value="DEFENSIN-LIKE PROTEIN"/>
    <property type="match status" value="1"/>
</dbReference>
<dbReference type="PANTHER" id="PTHR33147">
    <property type="entry name" value="DEFENSIN-LIKE PROTEIN 1"/>
    <property type="match status" value="1"/>
</dbReference>
<dbReference type="Pfam" id="PF00304">
    <property type="entry name" value="Gamma-thionin"/>
    <property type="match status" value="1"/>
</dbReference>
<dbReference type="PRINTS" id="PR00288">
    <property type="entry name" value="PUROTHIONIN"/>
</dbReference>
<dbReference type="SMART" id="SM00505">
    <property type="entry name" value="Knot1"/>
    <property type="match status" value="1"/>
</dbReference>
<dbReference type="SUPFAM" id="SSF57095">
    <property type="entry name" value="Scorpion toxin-like"/>
    <property type="match status" value="1"/>
</dbReference>
<dbReference type="PROSITE" id="PS00940">
    <property type="entry name" value="GAMMA_THIONIN"/>
    <property type="match status" value="1"/>
</dbReference>
<sequence length="78" mass="8799">MGRSIRLFATFFLIAMLFLSTEMGPMTSAEARTCESQSHRFHGTCVRESNCASVCQTEGFIGGNCRAFRRRCFCTRNC</sequence>
<protein>
    <recommendedName>
        <fullName>Defensin-like protein</fullName>
    </recommendedName>
    <alternativeName>
        <fullName>Gamma-thionin homolog PPT</fullName>
    </alternativeName>
</protein>
<comment type="function">
    <text>May be involved in the defense of the pistil against pathogen infection.</text>
</comment>
<comment type="subcellular location">
    <subcellularLocation>
        <location evidence="1">Secreted</location>
    </subcellularLocation>
</comment>
<comment type="tissue specificity">
    <text>Predominantly expressed in the pistil during all stages of flower development.</text>
</comment>
<comment type="similarity">
    <text evidence="3">Belongs to the DEFL family.</text>
</comment>
<comment type="caution">
    <text evidence="4">Was initially thought to be a thionin.</text>
</comment>
<evidence type="ECO:0000250" key="1"/>
<evidence type="ECO:0000255" key="2"/>
<evidence type="ECO:0000305" key="3"/>
<evidence type="ECO:0000305" key="4">
    <source>
    </source>
</evidence>
<feature type="signal peptide" evidence="2">
    <location>
        <begin position="1"/>
        <end position="31"/>
    </location>
</feature>
<feature type="chain" id="PRO_0000007051" description="Defensin-like protein">
    <location>
        <begin position="32"/>
        <end position="78"/>
    </location>
</feature>
<feature type="disulfide bond" evidence="1">
    <location>
        <begin position="34"/>
        <end position="78"/>
    </location>
</feature>
<feature type="disulfide bond" evidence="1">
    <location>
        <begin position="45"/>
        <end position="65"/>
    </location>
</feature>
<feature type="disulfide bond" evidence="1">
    <location>
        <begin position="51"/>
        <end position="72"/>
    </location>
</feature>
<feature type="disulfide bond" evidence="1">
    <location>
        <begin position="55"/>
        <end position="74"/>
    </location>
</feature>
<accession>Q40901</accession>
<reference key="1">
    <citation type="journal article" date="1994" name="Plant Mol. Biol.">
        <title>Characterization of a predominantly pistil-expressed gene encoding a gamma-thionin-like protein of Petunia inflata.</title>
        <authorList>
            <person name="Karunanandaa B."/>
            <person name="Singh A."/>
            <person name="Kao T.H."/>
        </authorList>
    </citation>
    <scope>NUCLEOTIDE SEQUENCE [GENOMIC DNA]</scope>
    <source>
        <tissue>Pistil</tissue>
    </source>
</reference>